<organism>
    <name type="scientific">Methanocaldococcus jannaschii (strain ATCC 43067 / DSM 2661 / JAL-1 / JCM 10045 / NBRC 100440)</name>
    <name type="common">Methanococcus jannaschii</name>
    <dbReference type="NCBI Taxonomy" id="243232"/>
    <lineage>
        <taxon>Archaea</taxon>
        <taxon>Methanobacteriati</taxon>
        <taxon>Methanobacteriota</taxon>
        <taxon>Methanomada group</taxon>
        <taxon>Methanococci</taxon>
        <taxon>Methanococcales</taxon>
        <taxon>Methanocaldococcaceae</taxon>
        <taxon>Methanocaldococcus</taxon>
    </lineage>
</organism>
<name>GLNK1_METJA</name>
<comment type="function">
    <text evidence="3">Involved in the regulation of nitrogen metabolism (PubMed:17203075). Regulates the activity of its targets by protein-protein interaction in response to the nitrogen status of the cell (PubMed:17203075). Regulates the activity of the ammonia channel Amt1 via direct interaction (PubMed:17203075).</text>
</comment>
<comment type="activity regulation">
    <text evidence="3">Formation of the GlnK1/Amt1 complex is decreased in the presence of Mg-ATP or 2-oxoglutarate. The presence of both effectors abolishes the formation of the complex.</text>
</comment>
<comment type="subunit">
    <text evidence="3">Homotrimer (PubMed:17203075). Interacts and forms a complex with Amt1 (PubMed:17203075).</text>
</comment>
<comment type="interaction">
    <interactant intactId="EBI-7201321">
        <id>Q60381</id>
    </interactant>
    <interactant intactId="EBI-7201308">
        <id>Q58739</id>
        <label>amt2</label>
    </interactant>
    <organismsDiffer>false</organismsDiffer>
    <experiments>2</experiments>
</comment>
<comment type="subcellular location">
    <subcellularLocation>
        <location evidence="1">Cytoplasm</location>
    </subcellularLocation>
</comment>
<comment type="similarity">
    <text evidence="2">Belongs to the P(II) protein family.</text>
</comment>
<feature type="chain" id="PRO_0000139815" description="Nitrogen regulatory protein GlnK1">
    <location>
        <begin position="1"/>
        <end position="112"/>
    </location>
</feature>
<feature type="binding site" evidence="3 7">
    <location>
        <position position="29"/>
    </location>
    <ligand>
        <name>ADP</name>
        <dbReference type="ChEBI" id="CHEBI:456216"/>
    </ligand>
</feature>
<feature type="binding site" evidence="3 6 8">
    <location>
        <position position="29"/>
    </location>
    <ligand>
        <name>ATP</name>
        <dbReference type="ChEBI" id="CHEBI:30616"/>
    </ligand>
</feature>
<feature type="binding site" evidence="3 6 8">
    <location>
        <position position="38"/>
    </location>
    <ligand>
        <name>ATP</name>
        <dbReference type="ChEBI" id="CHEBI:30616"/>
    </ligand>
</feature>
<feature type="binding site" evidence="3">
    <location>
        <begin position="52"/>
        <end position="54"/>
    </location>
    <ligand>
        <name>2-oxoglutarate</name>
        <dbReference type="ChEBI" id="CHEBI:16810"/>
    </ligand>
</feature>
<feature type="binding site" evidence="3 7">
    <location>
        <position position="64"/>
    </location>
    <ligand>
        <name>ADP</name>
        <dbReference type="ChEBI" id="CHEBI:456216"/>
    </ligand>
</feature>
<feature type="binding site" evidence="3 6 8">
    <location>
        <position position="64"/>
    </location>
    <ligand>
        <name>ATP</name>
        <dbReference type="ChEBI" id="CHEBI:30616"/>
    </ligand>
</feature>
<feature type="binding site" evidence="3 6 8">
    <location>
        <begin position="86"/>
        <end position="90"/>
    </location>
    <ligand>
        <name>ATP</name>
        <dbReference type="ChEBI" id="CHEBI:30616"/>
    </ligand>
</feature>
<feature type="binding site" evidence="3 7">
    <location>
        <begin position="88"/>
        <end position="90"/>
    </location>
    <ligand>
        <name>ADP</name>
        <dbReference type="ChEBI" id="CHEBI:456216"/>
    </ligand>
</feature>
<feature type="binding site" evidence="3 7">
    <location>
        <begin position="101"/>
        <end position="103"/>
    </location>
    <ligand>
        <name>ADP</name>
        <dbReference type="ChEBI" id="CHEBI:456216"/>
    </ligand>
</feature>
<feature type="binding site" evidence="3 6 8">
    <location>
        <begin position="101"/>
        <end position="103"/>
    </location>
    <ligand>
        <name>ATP</name>
        <dbReference type="ChEBI" id="CHEBI:30616"/>
    </ligand>
</feature>
<feature type="strand" evidence="11">
    <location>
        <begin position="2"/>
        <end position="8"/>
    </location>
</feature>
<feature type="helix" evidence="11">
    <location>
        <begin position="10"/>
        <end position="12"/>
    </location>
</feature>
<feature type="helix" evidence="11">
    <location>
        <begin position="13"/>
        <end position="22"/>
    </location>
</feature>
<feature type="strand" evidence="11">
    <location>
        <begin position="29"/>
        <end position="35"/>
    </location>
</feature>
<feature type="strand" evidence="10">
    <location>
        <begin position="38"/>
        <end position="40"/>
    </location>
</feature>
<feature type="strand" evidence="11">
    <location>
        <begin position="41"/>
        <end position="46"/>
    </location>
</feature>
<feature type="strand" evidence="11">
    <location>
        <begin position="49"/>
        <end position="53"/>
    </location>
</feature>
<feature type="strand" evidence="11">
    <location>
        <begin position="56"/>
        <end position="65"/>
    </location>
</feature>
<feature type="helix" evidence="11">
    <location>
        <begin position="67"/>
        <end position="69"/>
    </location>
</feature>
<feature type="helix" evidence="11">
    <location>
        <begin position="70"/>
        <end position="81"/>
    </location>
</feature>
<feature type="strand" evidence="11">
    <location>
        <begin position="88"/>
        <end position="95"/>
    </location>
</feature>
<feature type="strand" evidence="9">
    <location>
        <begin position="98"/>
        <end position="101"/>
    </location>
</feature>
<feature type="turn" evidence="11">
    <location>
        <begin position="102"/>
        <end position="104"/>
    </location>
</feature>
<feature type="helix" evidence="11">
    <location>
        <begin position="108"/>
        <end position="111"/>
    </location>
</feature>
<accession>Q60381</accession>
<proteinExistence type="evidence at protein level"/>
<protein>
    <recommendedName>
        <fullName evidence="5">Nitrogen regulatory protein GlnK1</fullName>
    </recommendedName>
</protein>
<evidence type="ECO:0000250" key="1">
    <source>
        <dbReference type="UniProtKB" id="B8ZYW0"/>
    </source>
</evidence>
<evidence type="ECO:0000255" key="2">
    <source>
        <dbReference type="PROSITE-ProRule" id="PRU00675"/>
    </source>
</evidence>
<evidence type="ECO:0000269" key="3">
    <source>
    </source>
</evidence>
<evidence type="ECO:0000303" key="4">
    <source>
    </source>
</evidence>
<evidence type="ECO:0000305" key="5"/>
<evidence type="ECO:0007744" key="6">
    <source>
        <dbReference type="PDB" id="2J9C"/>
    </source>
</evidence>
<evidence type="ECO:0007744" key="7">
    <source>
        <dbReference type="PDB" id="2J9D"/>
    </source>
</evidence>
<evidence type="ECO:0007744" key="8">
    <source>
        <dbReference type="PDB" id="2J9E"/>
    </source>
</evidence>
<evidence type="ECO:0007829" key="9">
    <source>
        <dbReference type="PDB" id="2J9C"/>
    </source>
</evidence>
<evidence type="ECO:0007829" key="10">
    <source>
        <dbReference type="PDB" id="2J9D"/>
    </source>
</evidence>
<evidence type="ECO:0007829" key="11">
    <source>
        <dbReference type="PDB" id="7P52"/>
    </source>
</evidence>
<keyword id="KW-0002">3D-structure</keyword>
<keyword id="KW-0067">ATP-binding</keyword>
<keyword id="KW-0963">Cytoplasm</keyword>
<keyword id="KW-0547">Nucleotide-binding</keyword>
<keyword id="KW-1185">Reference proteome</keyword>
<sequence>MKKVEAIIRPEKLEIVKKALSDAGYVGMTVSEVKGRGVQGGIVERYRGREYIVDLIPKVKIELVVKEEDVDNVIDIICENARTGNPGDGKIFVIPVERVVRVRTKEEGKEAL</sequence>
<dbReference type="EMBL" id="L77117">
    <property type="protein sequence ID" value="AAB98041.1"/>
    <property type="molecule type" value="Genomic_DNA"/>
</dbReference>
<dbReference type="PIR" id="C64307">
    <property type="entry name" value="C64307"/>
</dbReference>
<dbReference type="RefSeq" id="WP_010869551.1">
    <property type="nucleotide sequence ID" value="NC_000909.1"/>
</dbReference>
<dbReference type="PDB" id="2J9C">
    <property type="method" value="X-ray"/>
    <property type="resolution" value="1.30 A"/>
    <property type="chains" value="A/B/C=1-112"/>
</dbReference>
<dbReference type="PDB" id="2J9D">
    <property type="method" value="X-ray"/>
    <property type="resolution" value="2.10 A"/>
    <property type="chains" value="A/B/C/D/E/F/G/H/I/J/K/L=1-112"/>
</dbReference>
<dbReference type="PDB" id="2J9E">
    <property type="method" value="X-ray"/>
    <property type="resolution" value="1.62 A"/>
    <property type="chains" value="A/B/C=1-112"/>
</dbReference>
<dbReference type="PDB" id="7P52">
    <property type="method" value="X-ray"/>
    <property type="resolution" value="1.20 A"/>
    <property type="chains" value="A=1-112"/>
</dbReference>
<dbReference type="PDBsum" id="2J9C"/>
<dbReference type="PDBsum" id="2J9D"/>
<dbReference type="PDBsum" id="2J9E"/>
<dbReference type="PDBsum" id="7P52"/>
<dbReference type="SMR" id="Q60381"/>
<dbReference type="FunCoup" id="Q60381">
    <property type="interactions" value="46"/>
</dbReference>
<dbReference type="IntAct" id="Q60381">
    <property type="interactions" value="1"/>
</dbReference>
<dbReference type="MINT" id="Q60381"/>
<dbReference type="STRING" id="243232.MJ_0059"/>
<dbReference type="PaxDb" id="243232-MJ_0059"/>
<dbReference type="EnsemblBacteria" id="AAB98041">
    <property type="protein sequence ID" value="AAB98041"/>
    <property type="gene ID" value="MJ_0059"/>
</dbReference>
<dbReference type="GeneID" id="1450898"/>
<dbReference type="KEGG" id="mja:MJ_0059"/>
<dbReference type="eggNOG" id="arCOG02305">
    <property type="taxonomic scope" value="Archaea"/>
</dbReference>
<dbReference type="HOGENOM" id="CLU_082268_0_0_2"/>
<dbReference type="InParanoid" id="Q60381"/>
<dbReference type="OrthoDB" id="10960at2157"/>
<dbReference type="PhylomeDB" id="Q60381"/>
<dbReference type="EvolutionaryTrace" id="Q60381"/>
<dbReference type="Proteomes" id="UP000000805">
    <property type="component" value="Chromosome"/>
</dbReference>
<dbReference type="GO" id="GO:0005829">
    <property type="term" value="C:cytosol"/>
    <property type="evidence" value="ECO:0000318"/>
    <property type="project" value="GO_Central"/>
</dbReference>
<dbReference type="GO" id="GO:0005524">
    <property type="term" value="F:ATP binding"/>
    <property type="evidence" value="ECO:0000318"/>
    <property type="project" value="GO_Central"/>
</dbReference>
<dbReference type="GO" id="GO:0030234">
    <property type="term" value="F:enzyme regulator activity"/>
    <property type="evidence" value="ECO:0000318"/>
    <property type="project" value="GO_Central"/>
</dbReference>
<dbReference type="GO" id="GO:0006808">
    <property type="term" value="P:regulation of nitrogen utilization"/>
    <property type="evidence" value="ECO:0000318"/>
    <property type="project" value="GO_Central"/>
</dbReference>
<dbReference type="Gene3D" id="3.30.70.120">
    <property type="match status" value="1"/>
</dbReference>
<dbReference type="InterPro" id="IPR002187">
    <property type="entry name" value="N-reg_PII"/>
</dbReference>
<dbReference type="InterPro" id="IPR011322">
    <property type="entry name" value="N-reg_PII-like_a/b"/>
</dbReference>
<dbReference type="InterPro" id="IPR015867">
    <property type="entry name" value="N-reg_PII/ATP_PRibTrfase_C"/>
</dbReference>
<dbReference type="InterPro" id="IPR017918">
    <property type="entry name" value="N-reg_PII_CS"/>
</dbReference>
<dbReference type="PANTHER" id="PTHR30115">
    <property type="entry name" value="NITROGEN REGULATORY PROTEIN P-II"/>
    <property type="match status" value="1"/>
</dbReference>
<dbReference type="PANTHER" id="PTHR30115:SF11">
    <property type="entry name" value="NITROGEN REGULATORY PROTEIN P-II HOMOLOG"/>
    <property type="match status" value="1"/>
</dbReference>
<dbReference type="Pfam" id="PF00543">
    <property type="entry name" value="P-II"/>
    <property type="match status" value="1"/>
</dbReference>
<dbReference type="PIRSF" id="PIRSF039144">
    <property type="entry name" value="GlnB"/>
    <property type="match status" value="1"/>
</dbReference>
<dbReference type="PRINTS" id="PR00340">
    <property type="entry name" value="PIIGLNB"/>
</dbReference>
<dbReference type="SMART" id="SM00938">
    <property type="entry name" value="P-II"/>
    <property type="match status" value="1"/>
</dbReference>
<dbReference type="SUPFAM" id="SSF54913">
    <property type="entry name" value="GlnB-like"/>
    <property type="match status" value="1"/>
</dbReference>
<dbReference type="PROSITE" id="PS00638">
    <property type="entry name" value="PII_GLNB_CTER"/>
    <property type="match status" value="1"/>
</dbReference>
<dbReference type="PROSITE" id="PS51343">
    <property type="entry name" value="PII_GLNB_DOM"/>
    <property type="match status" value="1"/>
</dbReference>
<gene>
    <name evidence="4" type="primary">glnK1</name>
    <name type="ordered locus">MJ0059</name>
</gene>
<reference key="1">
    <citation type="journal article" date="1996" name="Science">
        <title>Complete genome sequence of the methanogenic archaeon, Methanococcus jannaschii.</title>
        <authorList>
            <person name="Bult C.J."/>
            <person name="White O."/>
            <person name="Olsen G.J."/>
            <person name="Zhou L."/>
            <person name="Fleischmann R.D."/>
            <person name="Sutton G.G."/>
            <person name="Blake J.A."/>
            <person name="FitzGerald L.M."/>
            <person name="Clayton R.A."/>
            <person name="Gocayne J.D."/>
            <person name="Kerlavage A.R."/>
            <person name="Dougherty B.A."/>
            <person name="Tomb J.-F."/>
            <person name="Adams M.D."/>
            <person name="Reich C.I."/>
            <person name="Overbeek R."/>
            <person name="Kirkness E.F."/>
            <person name="Weinstock K.G."/>
            <person name="Merrick J.M."/>
            <person name="Glodek A."/>
            <person name="Scott J.L."/>
            <person name="Geoghagen N.S.M."/>
            <person name="Weidman J.F."/>
            <person name="Fuhrmann J.L."/>
            <person name="Nguyen D."/>
            <person name="Utterback T.R."/>
            <person name="Kelley J.M."/>
            <person name="Peterson J.D."/>
            <person name="Sadow P.W."/>
            <person name="Hanna M.C."/>
            <person name="Cotton M.D."/>
            <person name="Roberts K.M."/>
            <person name="Hurst M.A."/>
            <person name="Kaine B.P."/>
            <person name="Borodovsky M."/>
            <person name="Klenk H.-P."/>
            <person name="Fraser C.M."/>
            <person name="Smith H.O."/>
            <person name="Woese C.R."/>
            <person name="Venter J.C."/>
        </authorList>
    </citation>
    <scope>NUCLEOTIDE SEQUENCE [LARGE SCALE GENOMIC DNA]</scope>
    <source>
        <strain>ATCC 43067 / DSM 2661 / JAL-1 / JCM 10045 / NBRC 100440</strain>
    </source>
</reference>
<reference evidence="6 7 8" key="2">
    <citation type="journal article" date="2007" name="EMBO J.">
        <title>Structure of GlnK1 with bound effectors indicates regulatory mechanism for ammonia uptake.</title>
        <authorList>
            <person name="Yildiz O."/>
            <person name="Kalthoff C."/>
            <person name="Raunser S."/>
            <person name="Kuhlbrandt W."/>
        </authorList>
    </citation>
    <scope>X-RAY CRYSTALLOGRAPHY (1.30 ANGSTROMS) IN COMPLEXES WITH ADP; AMP; ATP; MAGNESIUM AND 2-OXOGLUTARATE</scope>
    <scope>FUNCTION</scope>
    <scope>ACTIVITY REGULATION</scope>
    <scope>SUBUNIT</scope>
    <scope>INTERACTION WITH AMT1</scope>
</reference>